<evidence type="ECO:0000255" key="1">
    <source>
        <dbReference type="HAMAP-Rule" id="MF_00361"/>
    </source>
</evidence>
<feature type="chain" id="PRO_1000192528" description="NAD kinase">
    <location>
        <begin position="1"/>
        <end position="294"/>
    </location>
</feature>
<feature type="active site" description="Proton acceptor" evidence="1">
    <location>
        <position position="74"/>
    </location>
</feature>
<feature type="binding site" evidence="1">
    <location>
        <begin position="74"/>
        <end position="75"/>
    </location>
    <ligand>
        <name>NAD(+)</name>
        <dbReference type="ChEBI" id="CHEBI:57540"/>
    </ligand>
</feature>
<feature type="binding site" evidence="1">
    <location>
        <begin position="148"/>
        <end position="149"/>
    </location>
    <ligand>
        <name>NAD(+)</name>
        <dbReference type="ChEBI" id="CHEBI:57540"/>
    </ligand>
</feature>
<feature type="binding site" evidence="1">
    <location>
        <position position="159"/>
    </location>
    <ligand>
        <name>NAD(+)</name>
        <dbReference type="ChEBI" id="CHEBI:57540"/>
    </ligand>
</feature>
<feature type="binding site" evidence="1">
    <location>
        <position position="176"/>
    </location>
    <ligand>
        <name>NAD(+)</name>
        <dbReference type="ChEBI" id="CHEBI:57540"/>
    </ligand>
</feature>
<feature type="binding site" evidence="1">
    <location>
        <position position="178"/>
    </location>
    <ligand>
        <name>NAD(+)</name>
        <dbReference type="ChEBI" id="CHEBI:57540"/>
    </ligand>
</feature>
<feature type="binding site" evidence="1">
    <location>
        <begin position="189"/>
        <end position="194"/>
    </location>
    <ligand>
        <name>NAD(+)</name>
        <dbReference type="ChEBI" id="CHEBI:57540"/>
    </ligand>
</feature>
<feature type="binding site" evidence="1">
    <location>
        <position position="249"/>
    </location>
    <ligand>
        <name>NAD(+)</name>
        <dbReference type="ChEBI" id="CHEBI:57540"/>
    </ligand>
</feature>
<name>NADK_VIBCM</name>
<keyword id="KW-0067">ATP-binding</keyword>
<keyword id="KW-0963">Cytoplasm</keyword>
<keyword id="KW-0418">Kinase</keyword>
<keyword id="KW-0520">NAD</keyword>
<keyword id="KW-0521">NADP</keyword>
<keyword id="KW-0547">Nucleotide-binding</keyword>
<keyword id="KW-0808">Transferase</keyword>
<organism>
    <name type="scientific">Vibrio cholerae serotype O1 (strain M66-2)</name>
    <dbReference type="NCBI Taxonomy" id="579112"/>
    <lineage>
        <taxon>Bacteria</taxon>
        <taxon>Pseudomonadati</taxon>
        <taxon>Pseudomonadota</taxon>
        <taxon>Gammaproteobacteria</taxon>
        <taxon>Vibrionales</taxon>
        <taxon>Vibrionaceae</taxon>
        <taxon>Vibrio</taxon>
    </lineage>
</organism>
<accession>C3LTA3</accession>
<sequence length="294" mass="32698">MKKPFNVLAIIGKPRDQQAIQTHKEIYHWLRSLGYTVFIDDRLREILTDLPTEHFASLIELGKKADLAIVVGGDGNMLGAARVLSRFDISVIGVNRGNLGFLTDLNPEDFQQRLQEVLDGHYLQETRFLLEAEIHRHGQVKSHNAALNEAVLHPGKIAHMIEFEVYIDDNFAFSQRSDGLIVSTPTGSTAYSLSGGGPILSPSLNAITLVPMFPHTLSCRPLVVGGNQRIKLVVSPENRGTQEVSCDGQVSLPVSPGDEIHIYQSPNVLKLIHPQDYSYYHVLRTKLGWSSKLF</sequence>
<proteinExistence type="inferred from homology"/>
<gene>
    <name evidence="1" type="primary">nadK</name>
    <name type="ordered locus">VCM66_0810</name>
</gene>
<comment type="function">
    <text evidence="1">Involved in the regulation of the intracellular balance of NAD and NADP, and is a key enzyme in the biosynthesis of NADP. Catalyzes specifically the phosphorylation on 2'-hydroxyl of the adenosine moiety of NAD to yield NADP.</text>
</comment>
<comment type="catalytic activity">
    <reaction evidence="1">
        <text>NAD(+) + ATP = ADP + NADP(+) + H(+)</text>
        <dbReference type="Rhea" id="RHEA:18629"/>
        <dbReference type="ChEBI" id="CHEBI:15378"/>
        <dbReference type="ChEBI" id="CHEBI:30616"/>
        <dbReference type="ChEBI" id="CHEBI:57540"/>
        <dbReference type="ChEBI" id="CHEBI:58349"/>
        <dbReference type="ChEBI" id="CHEBI:456216"/>
        <dbReference type="EC" id="2.7.1.23"/>
    </reaction>
</comment>
<comment type="cofactor">
    <cofactor evidence="1">
        <name>a divalent metal cation</name>
        <dbReference type="ChEBI" id="CHEBI:60240"/>
    </cofactor>
</comment>
<comment type="subcellular location">
    <subcellularLocation>
        <location evidence="1">Cytoplasm</location>
    </subcellularLocation>
</comment>
<comment type="similarity">
    <text evidence="1">Belongs to the NAD kinase family.</text>
</comment>
<reference key="1">
    <citation type="journal article" date="2008" name="PLoS ONE">
        <title>A recalibrated molecular clock and independent origins for the cholera pandemic clones.</title>
        <authorList>
            <person name="Feng L."/>
            <person name="Reeves P.R."/>
            <person name="Lan R."/>
            <person name="Ren Y."/>
            <person name="Gao C."/>
            <person name="Zhou Z."/>
            <person name="Ren Y."/>
            <person name="Cheng J."/>
            <person name="Wang W."/>
            <person name="Wang J."/>
            <person name="Qian W."/>
            <person name="Li D."/>
            <person name="Wang L."/>
        </authorList>
    </citation>
    <scope>NUCLEOTIDE SEQUENCE [LARGE SCALE GENOMIC DNA]</scope>
    <source>
        <strain>M66-2</strain>
    </source>
</reference>
<protein>
    <recommendedName>
        <fullName evidence="1">NAD kinase</fullName>
        <ecNumber evidence="1">2.7.1.23</ecNumber>
    </recommendedName>
    <alternativeName>
        <fullName evidence="1">ATP-dependent NAD kinase</fullName>
    </alternativeName>
</protein>
<dbReference type="EC" id="2.7.1.23" evidence="1"/>
<dbReference type="EMBL" id="CP001233">
    <property type="protein sequence ID" value="ACP05129.1"/>
    <property type="molecule type" value="Genomic_DNA"/>
</dbReference>
<dbReference type="RefSeq" id="WP_000742830.1">
    <property type="nucleotide sequence ID" value="NC_012578.1"/>
</dbReference>
<dbReference type="SMR" id="C3LTA3"/>
<dbReference type="GeneID" id="89515030"/>
<dbReference type="KEGG" id="vcm:VCM66_0810"/>
<dbReference type="HOGENOM" id="CLU_008831_0_1_6"/>
<dbReference type="Proteomes" id="UP000001217">
    <property type="component" value="Chromosome I"/>
</dbReference>
<dbReference type="GO" id="GO:0005737">
    <property type="term" value="C:cytoplasm"/>
    <property type="evidence" value="ECO:0007669"/>
    <property type="project" value="UniProtKB-SubCell"/>
</dbReference>
<dbReference type="GO" id="GO:0005524">
    <property type="term" value="F:ATP binding"/>
    <property type="evidence" value="ECO:0007669"/>
    <property type="project" value="UniProtKB-KW"/>
</dbReference>
<dbReference type="GO" id="GO:0046872">
    <property type="term" value="F:metal ion binding"/>
    <property type="evidence" value="ECO:0007669"/>
    <property type="project" value="UniProtKB-UniRule"/>
</dbReference>
<dbReference type="GO" id="GO:0051287">
    <property type="term" value="F:NAD binding"/>
    <property type="evidence" value="ECO:0007669"/>
    <property type="project" value="UniProtKB-ARBA"/>
</dbReference>
<dbReference type="GO" id="GO:0003951">
    <property type="term" value="F:NAD+ kinase activity"/>
    <property type="evidence" value="ECO:0007669"/>
    <property type="project" value="UniProtKB-UniRule"/>
</dbReference>
<dbReference type="GO" id="GO:0019674">
    <property type="term" value="P:NAD metabolic process"/>
    <property type="evidence" value="ECO:0007669"/>
    <property type="project" value="InterPro"/>
</dbReference>
<dbReference type="GO" id="GO:0006741">
    <property type="term" value="P:NADP biosynthetic process"/>
    <property type="evidence" value="ECO:0007669"/>
    <property type="project" value="UniProtKB-UniRule"/>
</dbReference>
<dbReference type="FunFam" id="2.60.200.30:FF:000001">
    <property type="entry name" value="NAD kinase"/>
    <property type="match status" value="1"/>
</dbReference>
<dbReference type="Gene3D" id="3.40.50.10330">
    <property type="entry name" value="Probable inorganic polyphosphate/atp-NAD kinase, domain 1"/>
    <property type="match status" value="1"/>
</dbReference>
<dbReference type="Gene3D" id="2.60.200.30">
    <property type="entry name" value="Probable inorganic polyphosphate/atp-NAD kinase, domain 2"/>
    <property type="match status" value="1"/>
</dbReference>
<dbReference type="HAMAP" id="MF_00361">
    <property type="entry name" value="NAD_kinase"/>
    <property type="match status" value="1"/>
</dbReference>
<dbReference type="InterPro" id="IPR017438">
    <property type="entry name" value="ATP-NAD_kinase_N"/>
</dbReference>
<dbReference type="InterPro" id="IPR017437">
    <property type="entry name" value="ATP-NAD_kinase_PpnK-typ_C"/>
</dbReference>
<dbReference type="InterPro" id="IPR016064">
    <property type="entry name" value="NAD/diacylglycerol_kinase_sf"/>
</dbReference>
<dbReference type="InterPro" id="IPR002504">
    <property type="entry name" value="NADK"/>
</dbReference>
<dbReference type="NCBIfam" id="NF002306">
    <property type="entry name" value="PRK01231.1"/>
    <property type="match status" value="1"/>
</dbReference>
<dbReference type="NCBIfam" id="NF002893">
    <property type="entry name" value="PRK03378.1"/>
    <property type="match status" value="1"/>
</dbReference>
<dbReference type="PANTHER" id="PTHR20275">
    <property type="entry name" value="NAD KINASE"/>
    <property type="match status" value="1"/>
</dbReference>
<dbReference type="PANTHER" id="PTHR20275:SF0">
    <property type="entry name" value="NAD KINASE"/>
    <property type="match status" value="1"/>
</dbReference>
<dbReference type="Pfam" id="PF01513">
    <property type="entry name" value="NAD_kinase"/>
    <property type="match status" value="1"/>
</dbReference>
<dbReference type="Pfam" id="PF20143">
    <property type="entry name" value="NAD_kinase_C"/>
    <property type="match status" value="1"/>
</dbReference>
<dbReference type="SUPFAM" id="SSF111331">
    <property type="entry name" value="NAD kinase/diacylglycerol kinase-like"/>
    <property type="match status" value="1"/>
</dbReference>